<comment type="function">
    <text evidence="1">Catalyzes the ATP- as well as the pyrophosphate-dependent phosphorylation of a specific serine residue in HPr, a phosphocarrier protein of the phosphoenolpyruvate-dependent sugar phosphotransferase system (PTS). HprK/P also catalyzes the pyrophosphate-producing, inorganic phosphate-dependent dephosphorylation (phosphorolysis) of seryl-phosphorylated HPr (P-Ser-HPr). The two antagonistic activities of HprK/P are regulated by several intracellular metabolites, which change their concentration in response to the absence or presence of rapidly metabolisable carbon sources (glucose, fructose, etc.) in the growth medium. Therefore, by controlling the phosphorylation state of HPr, HPrK/P is a sensor enzyme that plays a major role in the regulation of carbon metabolism and sugar transport: it mediates carbon catabolite repression (CCR), and regulates PTS-catalyzed carbohydrate uptake and inducer exclusion.</text>
</comment>
<comment type="catalytic activity">
    <reaction evidence="1">
        <text>[HPr protein]-L-serine + ATP = [HPr protein]-O-phospho-L-serine + ADP + H(+)</text>
        <dbReference type="Rhea" id="RHEA:46600"/>
        <dbReference type="Rhea" id="RHEA-COMP:11602"/>
        <dbReference type="Rhea" id="RHEA-COMP:11603"/>
        <dbReference type="ChEBI" id="CHEBI:15378"/>
        <dbReference type="ChEBI" id="CHEBI:29999"/>
        <dbReference type="ChEBI" id="CHEBI:30616"/>
        <dbReference type="ChEBI" id="CHEBI:83421"/>
        <dbReference type="ChEBI" id="CHEBI:456216"/>
    </reaction>
</comment>
<comment type="catalytic activity">
    <reaction evidence="1">
        <text>[HPr protein]-O-phospho-L-serine + phosphate + H(+) = [HPr protein]-L-serine + diphosphate</text>
        <dbReference type="Rhea" id="RHEA:46604"/>
        <dbReference type="Rhea" id="RHEA-COMP:11602"/>
        <dbReference type="Rhea" id="RHEA-COMP:11603"/>
        <dbReference type="ChEBI" id="CHEBI:15378"/>
        <dbReference type="ChEBI" id="CHEBI:29999"/>
        <dbReference type="ChEBI" id="CHEBI:33019"/>
        <dbReference type="ChEBI" id="CHEBI:43474"/>
        <dbReference type="ChEBI" id="CHEBI:83421"/>
    </reaction>
</comment>
<comment type="cofactor">
    <cofactor evidence="1">
        <name>Mg(2+)</name>
        <dbReference type="ChEBI" id="CHEBI:18420"/>
    </cofactor>
</comment>
<comment type="subunit">
    <text evidence="1">Homohexamer.</text>
</comment>
<comment type="domain">
    <text evidence="1">The Walker A ATP-binding motif also binds Pi and PPi.</text>
</comment>
<comment type="miscellaneous">
    <text evidence="1">Both phosphorylation and phosphorolysis are carried out by the same active site and suggest a common mechanism for both reactions.</text>
</comment>
<comment type="similarity">
    <text evidence="1">Belongs to the HPrK/P family.</text>
</comment>
<evidence type="ECO:0000255" key="1">
    <source>
        <dbReference type="HAMAP-Rule" id="MF_01249"/>
    </source>
</evidence>
<protein>
    <recommendedName>
        <fullName evidence="1">HPr kinase/phosphorylase</fullName>
        <shortName evidence="1">HPrK/P</shortName>
        <ecNumber evidence="1">2.7.11.-</ecNumber>
        <ecNumber evidence="1">2.7.4.-</ecNumber>
    </recommendedName>
    <alternativeName>
        <fullName evidence="1">HPr(Ser) kinase/phosphorylase</fullName>
    </alternativeName>
</protein>
<proteinExistence type="inferred from homology"/>
<reference key="1">
    <citation type="journal article" date="2007" name="J. Bacteriol.">
        <title>The complete genome sequence of the lactic acid bacterial paradigm Lactococcus lactis subsp. cremoris MG1363.</title>
        <authorList>
            <person name="Wegmann U."/>
            <person name="O'Connell-Motherway M."/>
            <person name="Zomer A."/>
            <person name="Buist G."/>
            <person name="Shearman C."/>
            <person name="Canchaya C."/>
            <person name="Ventura M."/>
            <person name="Goesmann A."/>
            <person name="Gasson M.J."/>
            <person name="Kuipers O.P."/>
            <person name="van Sinderen D."/>
            <person name="Kok J."/>
        </authorList>
    </citation>
    <scope>NUCLEOTIDE SEQUENCE [LARGE SCALE GENOMIC DNA]</scope>
    <source>
        <strain>MG1363</strain>
    </source>
</reference>
<organism>
    <name type="scientific">Lactococcus lactis subsp. cremoris (strain MG1363)</name>
    <dbReference type="NCBI Taxonomy" id="416870"/>
    <lineage>
        <taxon>Bacteria</taxon>
        <taxon>Bacillati</taxon>
        <taxon>Bacillota</taxon>
        <taxon>Bacilli</taxon>
        <taxon>Lactobacillales</taxon>
        <taxon>Streptococcaceae</taxon>
        <taxon>Lactococcus</taxon>
        <taxon>Lactococcus cremoris subsp. cremoris</taxon>
    </lineage>
</organism>
<keyword id="KW-0067">ATP-binding</keyword>
<keyword id="KW-0119">Carbohydrate metabolism</keyword>
<keyword id="KW-0418">Kinase</keyword>
<keyword id="KW-0460">Magnesium</keyword>
<keyword id="KW-0479">Metal-binding</keyword>
<keyword id="KW-0511">Multifunctional enzyme</keyword>
<keyword id="KW-0547">Nucleotide-binding</keyword>
<keyword id="KW-0723">Serine/threonine-protein kinase</keyword>
<keyword id="KW-0808">Transferase</keyword>
<name>HPRK_LACLM</name>
<dbReference type="EC" id="2.7.11.-" evidence="1"/>
<dbReference type="EC" id="2.7.4.-" evidence="1"/>
<dbReference type="EMBL" id="AM406671">
    <property type="protein sequence ID" value="CAL97182.1"/>
    <property type="molecule type" value="Genomic_DNA"/>
</dbReference>
<dbReference type="RefSeq" id="WP_011834603.1">
    <property type="nucleotide sequence ID" value="NC_009004.1"/>
</dbReference>
<dbReference type="SMR" id="A2RIT6"/>
<dbReference type="STRING" id="416870.llmg_0582"/>
<dbReference type="GeneID" id="61108890"/>
<dbReference type="KEGG" id="llm:llmg_0582"/>
<dbReference type="eggNOG" id="COG1493">
    <property type="taxonomic scope" value="Bacteria"/>
</dbReference>
<dbReference type="HOGENOM" id="CLU_052030_0_1_9"/>
<dbReference type="OrthoDB" id="9778803at2"/>
<dbReference type="PhylomeDB" id="A2RIT6"/>
<dbReference type="Proteomes" id="UP000000364">
    <property type="component" value="Chromosome"/>
</dbReference>
<dbReference type="GO" id="GO:0005524">
    <property type="term" value="F:ATP binding"/>
    <property type="evidence" value="ECO:0007669"/>
    <property type="project" value="UniProtKB-UniRule"/>
</dbReference>
<dbReference type="GO" id="GO:0000287">
    <property type="term" value="F:magnesium ion binding"/>
    <property type="evidence" value="ECO:0007669"/>
    <property type="project" value="UniProtKB-UniRule"/>
</dbReference>
<dbReference type="GO" id="GO:0000155">
    <property type="term" value="F:phosphorelay sensor kinase activity"/>
    <property type="evidence" value="ECO:0007669"/>
    <property type="project" value="InterPro"/>
</dbReference>
<dbReference type="GO" id="GO:0004674">
    <property type="term" value="F:protein serine/threonine kinase activity"/>
    <property type="evidence" value="ECO:0007669"/>
    <property type="project" value="UniProtKB-KW"/>
</dbReference>
<dbReference type="GO" id="GO:0004712">
    <property type="term" value="F:protein serine/threonine/tyrosine kinase activity"/>
    <property type="evidence" value="ECO:0007669"/>
    <property type="project" value="UniProtKB-UniRule"/>
</dbReference>
<dbReference type="GO" id="GO:0006109">
    <property type="term" value="P:regulation of carbohydrate metabolic process"/>
    <property type="evidence" value="ECO:0007669"/>
    <property type="project" value="UniProtKB-UniRule"/>
</dbReference>
<dbReference type="CDD" id="cd01918">
    <property type="entry name" value="HprK_C"/>
    <property type="match status" value="1"/>
</dbReference>
<dbReference type="FunFam" id="3.40.50.300:FF:000174">
    <property type="entry name" value="HPr kinase/phosphorylase"/>
    <property type="match status" value="1"/>
</dbReference>
<dbReference type="Gene3D" id="3.40.1390.20">
    <property type="entry name" value="HprK N-terminal domain-like"/>
    <property type="match status" value="1"/>
</dbReference>
<dbReference type="Gene3D" id="3.40.50.300">
    <property type="entry name" value="P-loop containing nucleotide triphosphate hydrolases"/>
    <property type="match status" value="1"/>
</dbReference>
<dbReference type="HAMAP" id="MF_01249">
    <property type="entry name" value="HPr_kinase"/>
    <property type="match status" value="1"/>
</dbReference>
<dbReference type="InterPro" id="IPR003755">
    <property type="entry name" value="HPr(Ser)_kin/Pase"/>
</dbReference>
<dbReference type="InterPro" id="IPR011104">
    <property type="entry name" value="Hpr_kin/Pase_C"/>
</dbReference>
<dbReference type="InterPro" id="IPR011126">
    <property type="entry name" value="Hpr_kin/Pase_Hpr_N"/>
</dbReference>
<dbReference type="InterPro" id="IPR027417">
    <property type="entry name" value="P-loop_NTPase"/>
</dbReference>
<dbReference type="InterPro" id="IPR028979">
    <property type="entry name" value="Ser_kin/Pase_Hpr-like_N_sf"/>
</dbReference>
<dbReference type="NCBIfam" id="TIGR00679">
    <property type="entry name" value="hpr-ser"/>
    <property type="match status" value="1"/>
</dbReference>
<dbReference type="PANTHER" id="PTHR30305:SF1">
    <property type="entry name" value="HPR KINASE_PHOSPHORYLASE"/>
    <property type="match status" value="1"/>
</dbReference>
<dbReference type="PANTHER" id="PTHR30305">
    <property type="entry name" value="PROTEIN YJDM-RELATED"/>
    <property type="match status" value="1"/>
</dbReference>
<dbReference type="Pfam" id="PF07475">
    <property type="entry name" value="Hpr_kinase_C"/>
    <property type="match status" value="1"/>
</dbReference>
<dbReference type="Pfam" id="PF02603">
    <property type="entry name" value="Hpr_kinase_N"/>
    <property type="match status" value="1"/>
</dbReference>
<dbReference type="SUPFAM" id="SSF75138">
    <property type="entry name" value="HprK N-terminal domain-like"/>
    <property type="match status" value="1"/>
</dbReference>
<dbReference type="SUPFAM" id="SSF53795">
    <property type="entry name" value="PEP carboxykinase-like"/>
    <property type="match status" value="1"/>
</dbReference>
<sequence length="310" mass="34654">MAVSVQDLLDKIHFHVIYSTETALQKEITTSEIMRPGLEMAGYFDYFTPERIQLFGMKEWSYMMTVVGDNRYDLLKKVMAKETPVVIVARNLEIPSEMVAAAKKADIVLLQSREATSRLNSVLTSFLDERLAERTTVHGVLMDIFGVGVLIQGASGIGKSETGLELVKRGHRLVADDRVDVFQRDAFTLSGEPAEILRNMIEIRGVGIIDVMSLFGAGAVKDSTDIDMAIYLEYYDKEKAFDRLGNAPTIVEFSDVEVPQTRIPVKTGRNVSVIVEAAVMNFRAKQMGFDATKTFEDRLTDLISHNKESQ</sequence>
<accession>A2RIT6</accession>
<gene>
    <name evidence="1" type="primary">hprK</name>
    <name type="ordered locus">llmg_0582</name>
</gene>
<feature type="chain" id="PRO_1000067153" description="HPr kinase/phosphorylase">
    <location>
        <begin position="1"/>
        <end position="310"/>
    </location>
</feature>
<feature type="region of interest" description="Important for the catalytic mechanism of both phosphorylation and dephosphorylation" evidence="1">
    <location>
        <begin position="201"/>
        <end position="210"/>
    </location>
</feature>
<feature type="region of interest" description="Important for the catalytic mechanism of dephosphorylation" evidence="1">
    <location>
        <begin position="264"/>
        <end position="269"/>
    </location>
</feature>
<feature type="active site" evidence="1">
    <location>
        <position position="138"/>
    </location>
</feature>
<feature type="active site" evidence="1">
    <location>
        <position position="159"/>
    </location>
</feature>
<feature type="active site" description="Proton acceptor; for phosphorylation activity. Proton donor; for dephosphorylation activity" evidence="1">
    <location>
        <position position="177"/>
    </location>
</feature>
<feature type="active site" evidence="1">
    <location>
        <position position="243"/>
    </location>
</feature>
<feature type="binding site" evidence="1">
    <location>
        <begin position="153"/>
        <end position="160"/>
    </location>
    <ligand>
        <name>ATP</name>
        <dbReference type="ChEBI" id="CHEBI:30616"/>
    </ligand>
</feature>
<feature type="binding site" evidence="1">
    <location>
        <position position="160"/>
    </location>
    <ligand>
        <name>Mg(2+)</name>
        <dbReference type="ChEBI" id="CHEBI:18420"/>
    </ligand>
</feature>
<feature type="binding site" evidence="1">
    <location>
        <position position="202"/>
    </location>
    <ligand>
        <name>Mg(2+)</name>
        <dbReference type="ChEBI" id="CHEBI:18420"/>
    </ligand>
</feature>